<protein>
    <recommendedName>
        <fullName>Elongation factor Tu</fullName>
        <shortName>EF-Tu</shortName>
        <ecNumber evidence="2">3.6.5.3</ecNumber>
    </recommendedName>
</protein>
<organism>
    <name type="scientific">Spirochaeta aurantia</name>
    <dbReference type="NCBI Taxonomy" id="147"/>
    <lineage>
        <taxon>Bacteria</taxon>
        <taxon>Pseudomonadati</taxon>
        <taxon>Spirochaetota</taxon>
        <taxon>Spirochaetia</taxon>
        <taxon>Spirochaetales</taxon>
        <taxon>Spirochaetaceae</taxon>
        <taxon>Spirochaeta</taxon>
    </lineage>
</organism>
<name>EFTU_SPIAU</name>
<sequence length="375" mass="40890">MAKQNFVRSKPHINVGAIGHVDHGKTTLTAALTMYGAKKHGGKVMNYDDIDNAPEEKERGITINTRHVEYESAARHYAHVDCPGHADYVKNMITGAAQMDGAILLVAADSGPEPQTREHILLAKQVGVANLVIFLNKMDLADPELVELVEMEVRDLLNLYGFDGEKTPFIRGSAFAAMSKPDDPAATKCLDELLDTMDKYFVIPERALDKPFLMPIEDVFSISGRGTVVTGAIAQGKVKVGDTVEIVGIKPTQTTVVTGVEMFNKLLDAGQAGDNIGALLRGIEKNQVERGQVLAAPKSITPHTNFKATIYCLSKEEGGRHNPFFSGYRPQFYFRTTDVTGTVTLPEGKQMVMPGDNTELVVELITPMDKGSRFA</sequence>
<comment type="function">
    <text evidence="2">GTP hydrolase that promotes the GTP-dependent binding of aminoacyl-tRNA to the A-site of ribosomes during protein biosynthesis.</text>
</comment>
<comment type="catalytic activity">
    <reaction evidence="2">
        <text>GTP + H2O = GDP + phosphate + H(+)</text>
        <dbReference type="Rhea" id="RHEA:19669"/>
        <dbReference type="ChEBI" id="CHEBI:15377"/>
        <dbReference type="ChEBI" id="CHEBI:15378"/>
        <dbReference type="ChEBI" id="CHEBI:37565"/>
        <dbReference type="ChEBI" id="CHEBI:43474"/>
        <dbReference type="ChEBI" id="CHEBI:58189"/>
        <dbReference type="EC" id="3.6.5.3"/>
    </reaction>
    <physiologicalReaction direction="left-to-right" evidence="2">
        <dbReference type="Rhea" id="RHEA:19670"/>
    </physiologicalReaction>
</comment>
<comment type="subunit">
    <text evidence="1">Monomer.</text>
</comment>
<comment type="subcellular location">
    <subcellularLocation>
        <location evidence="1">Cytoplasm</location>
    </subcellularLocation>
</comment>
<comment type="similarity">
    <text evidence="3">Belongs to the TRAFAC class translation factor GTPase superfamily. Classic translation factor GTPase family. EF-Tu/EF-1A subfamily.</text>
</comment>
<gene>
    <name type="primary">tuf</name>
</gene>
<proteinExistence type="inferred from homology"/>
<keyword id="KW-0963">Cytoplasm</keyword>
<keyword id="KW-0251">Elongation factor</keyword>
<keyword id="KW-0342">GTP-binding</keyword>
<keyword id="KW-0378">Hydrolase</keyword>
<keyword id="KW-0460">Magnesium</keyword>
<keyword id="KW-0479">Metal-binding</keyword>
<keyword id="KW-0547">Nucleotide-binding</keyword>
<keyword id="KW-0648">Protein biosynthesis</keyword>
<reference key="1">
    <citation type="journal article" date="1993" name="Antonie Van Leeuwenhoek">
        <title>Phylogenetic relationships of Bacteria based on comparative sequence analysis of elongation factor Tu and ATP-synthase beta-subunit genes.</title>
        <authorList>
            <person name="Ludwig W."/>
            <person name="Neumaier J."/>
            <person name="Klugbauer N."/>
            <person name="Brockmann E."/>
            <person name="Roller C."/>
            <person name="Klugbauer S."/>
            <person name="Reetz K."/>
            <person name="Schachtner I."/>
            <person name="Ludvigsen A."/>
            <person name="Bachleitner M."/>
            <person name="Fischer U."/>
            <person name="Schleifer K.H."/>
        </authorList>
    </citation>
    <scope>NUCLEOTIDE SEQUENCE [GENOMIC DNA]</scope>
    <source>
        <strain>ATCC 25082 / DSM 1902 / J1</strain>
    </source>
</reference>
<dbReference type="EC" id="3.6.5.3" evidence="2"/>
<dbReference type="EMBL" id="X76874">
    <property type="protein sequence ID" value="CAA54201.1"/>
    <property type="molecule type" value="Genomic_DNA"/>
</dbReference>
<dbReference type="PIR" id="T10899">
    <property type="entry name" value="T10899"/>
</dbReference>
<dbReference type="SMR" id="P42478"/>
<dbReference type="GO" id="GO:0005737">
    <property type="term" value="C:cytoplasm"/>
    <property type="evidence" value="ECO:0007669"/>
    <property type="project" value="UniProtKB-SubCell"/>
</dbReference>
<dbReference type="GO" id="GO:0005525">
    <property type="term" value="F:GTP binding"/>
    <property type="evidence" value="ECO:0007669"/>
    <property type="project" value="UniProtKB-KW"/>
</dbReference>
<dbReference type="GO" id="GO:0003924">
    <property type="term" value="F:GTPase activity"/>
    <property type="evidence" value="ECO:0007669"/>
    <property type="project" value="InterPro"/>
</dbReference>
<dbReference type="GO" id="GO:0003746">
    <property type="term" value="F:translation elongation factor activity"/>
    <property type="evidence" value="ECO:0007669"/>
    <property type="project" value="UniProtKB-KW"/>
</dbReference>
<dbReference type="CDD" id="cd01884">
    <property type="entry name" value="EF_Tu"/>
    <property type="match status" value="1"/>
</dbReference>
<dbReference type="CDD" id="cd03697">
    <property type="entry name" value="EFTU_II"/>
    <property type="match status" value="1"/>
</dbReference>
<dbReference type="CDD" id="cd03707">
    <property type="entry name" value="EFTU_III"/>
    <property type="match status" value="1"/>
</dbReference>
<dbReference type="FunFam" id="2.40.30.10:FF:000001">
    <property type="entry name" value="Elongation factor Tu"/>
    <property type="match status" value="1"/>
</dbReference>
<dbReference type="FunFam" id="3.40.50.300:FF:000576">
    <property type="entry name" value="Elongation factor Tu"/>
    <property type="match status" value="1"/>
</dbReference>
<dbReference type="Gene3D" id="3.40.50.300">
    <property type="entry name" value="P-loop containing nucleotide triphosphate hydrolases"/>
    <property type="match status" value="1"/>
</dbReference>
<dbReference type="Gene3D" id="2.40.30.10">
    <property type="entry name" value="Translation factors"/>
    <property type="match status" value="2"/>
</dbReference>
<dbReference type="InterPro" id="IPR041709">
    <property type="entry name" value="EF-Tu_GTP-bd"/>
</dbReference>
<dbReference type="InterPro" id="IPR050055">
    <property type="entry name" value="EF-Tu_GTPase"/>
</dbReference>
<dbReference type="InterPro" id="IPR004161">
    <property type="entry name" value="EFTu-like_2"/>
</dbReference>
<dbReference type="InterPro" id="IPR033720">
    <property type="entry name" value="EFTU_2"/>
</dbReference>
<dbReference type="InterPro" id="IPR031157">
    <property type="entry name" value="G_TR_CS"/>
</dbReference>
<dbReference type="InterPro" id="IPR027417">
    <property type="entry name" value="P-loop_NTPase"/>
</dbReference>
<dbReference type="InterPro" id="IPR005225">
    <property type="entry name" value="Small_GTP-bd"/>
</dbReference>
<dbReference type="InterPro" id="IPR000795">
    <property type="entry name" value="T_Tr_GTP-bd_dom"/>
</dbReference>
<dbReference type="InterPro" id="IPR009000">
    <property type="entry name" value="Transl_B-barrel_sf"/>
</dbReference>
<dbReference type="InterPro" id="IPR009001">
    <property type="entry name" value="Transl_elong_EF1A/Init_IF2_C"/>
</dbReference>
<dbReference type="InterPro" id="IPR004541">
    <property type="entry name" value="Transl_elong_EFTu/EF1A_bac/org"/>
</dbReference>
<dbReference type="InterPro" id="IPR004160">
    <property type="entry name" value="Transl_elong_EFTu/EF1A_C"/>
</dbReference>
<dbReference type="NCBIfam" id="TIGR00485">
    <property type="entry name" value="EF-Tu"/>
    <property type="match status" value="1"/>
</dbReference>
<dbReference type="NCBIfam" id="NF000766">
    <property type="entry name" value="PRK00049.1"/>
    <property type="match status" value="1"/>
</dbReference>
<dbReference type="NCBIfam" id="NF009372">
    <property type="entry name" value="PRK12735.1"/>
    <property type="match status" value="1"/>
</dbReference>
<dbReference type="NCBIfam" id="NF009373">
    <property type="entry name" value="PRK12736.1"/>
    <property type="match status" value="1"/>
</dbReference>
<dbReference type="NCBIfam" id="TIGR00231">
    <property type="entry name" value="small_GTP"/>
    <property type="match status" value="1"/>
</dbReference>
<dbReference type="PANTHER" id="PTHR43721:SF22">
    <property type="entry name" value="ELONGATION FACTOR TU, MITOCHONDRIAL"/>
    <property type="match status" value="1"/>
</dbReference>
<dbReference type="PANTHER" id="PTHR43721">
    <property type="entry name" value="ELONGATION FACTOR TU-RELATED"/>
    <property type="match status" value="1"/>
</dbReference>
<dbReference type="Pfam" id="PF00009">
    <property type="entry name" value="GTP_EFTU"/>
    <property type="match status" value="1"/>
</dbReference>
<dbReference type="Pfam" id="PF03144">
    <property type="entry name" value="GTP_EFTU_D2"/>
    <property type="match status" value="1"/>
</dbReference>
<dbReference type="Pfam" id="PF03143">
    <property type="entry name" value="GTP_EFTU_D3"/>
    <property type="match status" value="1"/>
</dbReference>
<dbReference type="PRINTS" id="PR00315">
    <property type="entry name" value="ELONGATNFCT"/>
</dbReference>
<dbReference type="SUPFAM" id="SSF50465">
    <property type="entry name" value="EF-Tu/eEF-1alpha/eIF2-gamma C-terminal domain"/>
    <property type="match status" value="1"/>
</dbReference>
<dbReference type="SUPFAM" id="SSF52540">
    <property type="entry name" value="P-loop containing nucleoside triphosphate hydrolases"/>
    <property type="match status" value="1"/>
</dbReference>
<dbReference type="SUPFAM" id="SSF50447">
    <property type="entry name" value="Translation proteins"/>
    <property type="match status" value="1"/>
</dbReference>
<dbReference type="PROSITE" id="PS00301">
    <property type="entry name" value="G_TR_1"/>
    <property type="match status" value="1"/>
</dbReference>
<dbReference type="PROSITE" id="PS51722">
    <property type="entry name" value="G_TR_2"/>
    <property type="match status" value="1"/>
</dbReference>
<accession>P42478</accession>
<feature type="chain" id="PRO_0000091387" description="Elongation factor Tu">
    <location>
        <begin position="1"/>
        <end position="375" status="greater than"/>
    </location>
</feature>
<feature type="domain" description="tr-type G" evidence="3">
    <location>
        <begin position="10"/>
        <end position="205"/>
    </location>
</feature>
<feature type="region of interest" description="G1" evidence="3">
    <location>
        <begin position="19"/>
        <end position="26"/>
    </location>
</feature>
<feature type="region of interest" description="G2" evidence="3">
    <location>
        <begin position="60"/>
        <end position="64"/>
    </location>
</feature>
<feature type="region of interest" description="G3" evidence="3">
    <location>
        <begin position="81"/>
        <end position="84"/>
    </location>
</feature>
<feature type="region of interest" description="G4" evidence="3">
    <location>
        <begin position="136"/>
        <end position="139"/>
    </location>
</feature>
<feature type="region of interest" description="G5" evidence="3">
    <location>
        <begin position="173"/>
        <end position="175"/>
    </location>
</feature>
<feature type="binding site" evidence="1">
    <location>
        <begin position="19"/>
        <end position="26"/>
    </location>
    <ligand>
        <name>GTP</name>
        <dbReference type="ChEBI" id="CHEBI:37565"/>
    </ligand>
</feature>
<feature type="binding site" evidence="2">
    <location>
        <position position="26"/>
    </location>
    <ligand>
        <name>Mg(2+)</name>
        <dbReference type="ChEBI" id="CHEBI:18420"/>
    </ligand>
</feature>
<feature type="binding site" evidence="1">
    <location>
        <begin position="81"/>
        <end position="85"/>
    </location>
    <ligand>
        <name>GTP</name>
        <dbReference type="ChEBI" id="CHEBI:37565"/>
    </ligand>
</feature>
<feature type="binding site" evidence="1">
    <location>
        <begin position="136"/>
        <end position="139"/>
    </location>
    <ligand>
        <name>GTP</name>
        <dbReference type="ChEBI" id="CHEBI:37565"/>
    </ligand>
</feature>
<feature type="non-terminal residue">
    <location>
        <position position="375"/>
    </location>
</feature>
<evidence type="ECO:0000250" key="1"/>
<evidence type="ECO:0000255" key="2">
    <source>
        <dbReference type="HAMAP-Rule" id="MF_00118"/>
    </source>
</evidence>
<evidence type="ECO:0000255" key="3">
    <source>
        <dbReference type="PROSITE-ProRule" id="PRU01059"/>
    </source>
</evidence>